<protein>
    <recommendedName>
        <fullName evidence="1">Phenylalanine--tRNA ligase alpha subunit</fullName>
        <ecNumber evidence="1">6.1.1.20</ecNumber>
    </recommendedName>
    <alternativeName>
        <fullName evidence="1">Phenylalanyl-tRNA synthetase alpha subunit</fullName>
        <shortName evidence="1">PheRS</shortName>
    </alternativeName>
</protein>
<keyword id="KW-0030">Aminoacyl-tRNA synthetase</keyword>
<keyword id="KW-0067">ATP-binding</keyword>
<keyword id="KW-0963">Cytoplasm</keyword>
<keyword id="KW-0436">Ligase</keyword>
<keyword id="KW-0460">Magnesium</keyword>
<keyword id="KW-0479">Metal-binding</keyword>
<keyword id="KW-0547">Nucleotide-binding</keyword>
<keyword id="KW-0648">Protein biosynthesis</keyword>
<keyword id="KW-1185">Reference proteome</keyword>
<gene>
    <name evidence="1" type="primary">pheS</name>
    <name type="ordered locus">MCCL_1327</name>
</gene>
<comment type="catalytic activity">
    <reaction evidence="1">
        <text>tRNA(Phe) + L-phenylalanine + ATP = L-phenylalanyl-tRNA(Phe) + AMP + diphosphate + H(+)</text>
        <dbReference type="Rhea" id="RHEA:19413"/>
        <dbReference type="Rhea" id="RHEA-COMP:9668"/>
        <dbReference type="Rhea" id="RHEA-COMP:9699"/>
        <dbReference type="ChEBI" id="CHEBI:15378"/>
        <dbReference type="ChEBI" id="CHEBI:30616"/>
        <dbReference type="ChEBI" id="CHEBI:33019"/>
        <dbReference type="ChEBI" id="CHEBI:58095"/>
        <dbReference type="ChEBI" id="CHEBI:78442"/>
        <dbReference type="ChEBI" id="CHEBI:78531"/>
        <dbReference type="ChEBI" id="CHEBI:456215"/>
        <dbReference type="EC" id="6.1.1.20"/>
    </reaction>
</comment>
<comment type="cofactor">
    <cofactor evidence="1">
        <name>Mg(2+)</name>
        <dbReference type="ChEBI" id="CHEBI:18420"/>
    </cofactor>
    <text evidence="1">Binds 2 magnesium ions per tetramer.</text>
</comment>
<comment type="subunit">
    <text evidence="1">Tetramer of two alpha and two beta subunits.</text>
</comment>
<comment type="subcellular location">
    <subcellularLocation>
        <location evidence="1">Cytoplasm</location>
    </subcellularLocation>
</comment>
<comment type="similarity">
    <text evidence="1">Belongs to the class-II aminoacyl-tRNA synthetase family. Phe-tRNA synthetase alpha subunit type 1 subfamily.</text>
</comment>
<proteinExistence type="inferred from homology"/>
<organism>
    <name type="scientific">Macrococcus caseolyticus (strain JCSC5402)</name>
    <name type="common">Macrococcoides caseolyticum</name>
    <dbReference type="NCBI Taxonomy" id="458233"/>
    <lineage>
        <taxon>Bacteria</taxon>
        <taxon>Bacillati</taxon>
        <taxon>Bacillota</taxon>
        <taxon>Bacilli</taxon>
        <taxon>Bacillales</taxon>
        <taxon>Staphylococcaceae</taxon>
        <taxon>Macrococcoides</taxon>
    </lineage>
</organism>
<accession>B9E766</accession>
<feature type="chain" id="PRO_1000199315" description="Phenylalanine--tRNA ligase alpha subunit">
    <location>
        <begin position="1"/>
        <end position="356"/>
    </location>
</feature>
<feature type="binding site" evidence="1">
    <location>
        <position position="258"/>
    </location>
    <ligand>
        <name>Mg(2+)</name>
        <dbReference type="ChEBI" id="CHEBI:18420"/>
        <note>shared with beta subunit</note>
    </ligand>
</feature>
<name>SYFA_MACCJ</name>
<reference key="1">
    <citation type="journal article" date="2009" name="J. Bacteriol.">
        <title>Complete genome sequence of Macrococcus caseolyticus strain JCSCS5402, reflecting the ancestral genome of the human-pathogenic staphylococci.</title>
        <authorList>
            <person name="Baba T."/>
            <person name="Kuwahara-Arai K."/>
            <person name="Uchiyama I."/>
            <person name="Takeuchi F."/>
            <person name="Ito T."/>
            <person name="Hiramatsu K."/>
        </authorList>
    </citation>
    <scope>NUCLEOTIDE SEQUENCE [LARGE SCALE GENOMIC DNA]</scope>
    <source>
        <strain>JCSC5402</strain>
    </source>
</reference>
<sequence>MELKERLQALKSEAVDKVSQITDKKALQDIKVSYIGKKGVITGLMKEMKSLPNEEKPMFGQLVNDAKQTVESAIAEVEARIEAELVNKRLQSETIDITLPGKKLSPGSSHPLDRIVEDIEDLFIGLGYEIVEGFEVESDHYNFEALNLPKSHPARDMQDSFYISEEVLMRTHTSPVQARTLESRNGEGPVKIICPGKVYRRDSDDATHSHQFTQIEGLVVDENIKMSDLKGTLEYFAKKMFGEDREIRLRPSFFPFTEPSVEVDISCFKCKGKGCNVCKGTGWIEILGAGMVHPNVLEMAGFDSNKYSGFAFGMGPDRIAMLKYGIEDIRHFYTNDLRFIRQFLRLEDGGEPNVSK</sequence>
<dbReference type="EC" id="6.1.1.20" evidence="1"/>
<dbReference type="EMBL" id="AP009484">
    <property type="protein sequence ID" value="BAH18034.1"/>
    <property type="molecule type" value="Genomic_DNA"/>
</dbReference>
<dbReference type="RefSeq" id="WP_012657232.1">
    <property type="nucleotide sequence ID" value="NC_011999.1"/>
</dbReference>
<dbReference type="SMR" id="B9E766"/>
<dbReference type="STRING" id="458233.MCCL_1327"/>
<dbReference type="GeneID" id="61128771"/>
<dbReference type="KEGG" id="mcl:MCCL_1327"/>
<dbReference type="eggNOG" id="COG0016">
    <property type="taxonomic scope" value="Bacteria"/>
</dbReference>
<dbReference type="HOGENOM" id="CLU_025086_0_1_9"/>
<dbReference type="OrthoDB" id="9800719at2"/>
<dbReference type="Proteomes" id="UP000001383">
    <property type="component" value="Chromosome"/>
</dbReference>
<dbReference type="GO" id="GO:0005737">
    <property type="term" value="C:cytoplasm"/>
    <property type="evidence" value="ECO:0007669"/>
    <property type="project" value="UniProtKB-SubCell"/>
</dbReference>
<dbReference type="GO" id="GO:0005524">
    <property type="term" value="F:ATP binding"/>
    <property type="evidence" value="ECO:0007669"/>
    <property type="project" value="UniProtKB-UniRule"/>
</dbReference>
<dbReference type="GO" id="GO:0140096">
    <property type="term" value="F:catalytic activity, acting on a protein"/>
    <property type="evidence" value="ECO:0007669"/>
    <property type="project" value="UniProtKB-ARBA"/>
</dbReference>
<dbReference type="GO" id="GO:0000287">
    <property type="term" value="F:magnesium ion binding"/>
    <property type="evidence" value="ECO:0007669"/>
    <property type="project" value="UniProtKB-UniRule"/>
</dbReference>
<dbReference type="GO" id="GO:0004826">
    <property type="term" value="F:phenylalanine-tRNA ligase activity"/>
    <property type="evidence" value="ECO:0007669"/>
    <property type="project" value="UniProtKB-UniRule"/>
</dbReference>
<dbReference type="GO" id="GO:0016740">
    <property type="term" value="F:transferase activity"/>
    <property type="evidence" value="ECO:0007669"/>
    <property type="project" value="UniProtKB-ARBA"/>
</dbReference>
<dbReference type="GO" id="GO:0000049">
    <property type="term" value="F:tRNA binding"/>
    <property type="evidence" value="ECO:0007669"/>
    <property type="project" value="InterPro"/>
</dbReference>
<dbReference type="GO" id="GO:0006432">
    <property type="term" value="P:phenylalanyl-tRNA aminoacylation"/>
    <property type="evidence" value="ECO:0007669"/>
    <property type="project" value="UniProtKB-UniRule"/>
</dbReference>
<dbReference type="CDD" id="cd00496">
    <property type="entry name" value="PheRS_alpha_core"/>
    <property type="match status" value="1"/>
</dbReference>
<dbReference type="FunFam" id="3.30.930.10:FF:000003">
    <property type="entry name" value="Phenylalanine--tRNA ligase alpha subunit"/>
    <property type="match status" value="1"/>
</dbReference>
<dbReference type="Gene3D" id="3.30.930.10">
    <property type="entry name" value="Bira Bifunctional Protein, Domain 2"/>
    <property type="match status" value="1"/>
</dbReference>
<dbReference type="HAMAP" id="MF_00281">
    <property type="entry name" value="Phe_tRNA_synth_alpha1"/>
    <property type="match status" value="1"/>
</dbReference>
<dbReference type="InterPro" id="IPR006195">
    <property type="entry name" value="aa-tRNA-synth_II"/>
</dbReference>
<dbReference type="InterPro" id="IPR045864">
    <property type="entry name" value="aa-tRNA-synth_II/BPL/LPL"/>
</dbReference>
<dbReference type="InterPro" id="IPR004529">
    <property type="entry name" value="Phe-tRNA-synth_IIc_asu"/>
</dbReference>
<dbReference type="InterPro" id="IPR004188">
    <property type="entry name" value="Phe-tRNA_ligase_II_N"/>
</dbReference>
<dbReference type="InterPro" id="IPR022911">
    <property type="entry name" value="Phe_tRNA_ligase_alpha1_bac"/>
</dbReference>
<dbReference type="InterPro" id="IPR002319">
    <property type="entry name" value="Phenylalanyl-tRNA_Synthase"/>
</dbReference>
<dbReference type="InterPro" id="IPR010978">
    <property type="entry name" value="tRNA-bd_arm"/>
</dbReference>
<dbReference type="NCBIfam" id="TIGR00468">
    <property type="entry name" value="pheS"/>
    <property type="match status" value="1"/>
</dbReference>
<dbReference type="PANTHER" id="PTHR11538:SF41">
    <property type="entry name" value="PHENYLALANINE--TRNA LIGASE, MITOCHONDRIAL"/>
    <property type="match status" value="1"/>
</dbReference>
<dbReference type="PANTHER" id="PTHR11538">
    <property type="entry name" value="PHENYLALANYL-TRNA SYNTHETASE"/>
    <property type="match status" value="1"/>
</dbReference>
<dbReference type="Pfam" id="PF02912">
    <property type="entry name" value="Phe_tRNA-synt_N"/>
    <property type="match status" value="1"/>
</dbReference>
<dbReference type="Pfam" id="PF01409">
    <property type="entry name" value="tRNA-synt_2d"/>
    <property type="match status" value="1"/>
</dbReference>
<dbReference type="SUPFAM" id="SSF55681">
    <property type="entry name" value="Class II aaRS and biotin synthetases"/>
    <property type="match status" value="1"/>
</dbReference>
<dbReference type="SUPFAM" id="SSF46589">
    <property type="entry name" value="tRNA-binding arm"/>
    <property type="match status" value="1"/>
</dbReference>
<dbReference type="PROSITE" id="PS50862">
    <property type="entry name" value="AA_TRNA_LIGASE_II"/>
    <property type="match status" value="1"/>
</dbReference>
<evidence type="ECO:0000255" key="1">
    <source>
        <dbReference type="HAMAP-Rule" id="MF_00281"/>
    </source>
</evidence>